<keyword id="KW-0067">ATP-binding</keyword>
<keyword id="KW-0131">Cell cycle</keyword>
<keyword id="KW-0132">Cell division</keyword>
<keyword id="KW-0235">DNA replication</keyword>
<keyword id="KW-0238">DNA-binding</keyword>
<keyword id="KW-0347">Helicase</keyword>
<keyword id="KW-0378">Hydrolase</keyword>
<keyword id="KW-0479">Metal-binding</keyword>
<keyword id="KW-0498">Mitosis</keyword>
<keyword id="KW-0547">Nucleotide-binding</keyword>
<keyword id="KW-0539">Nucleus</keyword>
<keyword id="KW-1185">Reference proteome</keyword>
<keyword id="KW-0862">Zinc</keyword>
<keyword id="KW-0863">Zinc-finger</keyword>
<proteinExistence type="inferred from homology"/>
<organism>
    <name type="scientific">Anopheles gambiae</name>
    <name type="common">African malaria mosquito</name>
    <dbReference type="NCBI Taxonomy" id="7165"/>
    <lineage>
        <taxon>Eukaryota</taxon>
        <taxon>Metazoa</taxon>
        <taxon>Ecdysozoa</taxon>
        <taxon>Arthropoda</taxon>
        <taxon>Hexapoda</taxon>
        <taxon>Insecta</taxon>
        <taxon>Pterygota</taxon>
        <taxon>Neoptera</taxon>
        <taxon>Endopterygota</taxon>
        <taxon>Diptera</taxon>
        <taxon>Nematocera</taxon>
        <taxon>Culicoidea</taxon>
        <taxon>Culicidae</taxon>
        <taxon>Anophelinae</taxon>
        <taxon>Anopheles</taxon>
    </lineage>
</organism>
<evidence type="ECO:0000250" key="1"/>
<evidence type="ECO:0000250" key="2">
    <source>
        <dbReference type="UniProtKB" id="Q14566"/>
    </source>
</evidence>
<evidence type="ECO:0000250" key="3">
    <source>
        <dbReference type="UniProtKB" id="Q9V461"/>
    </source>
</evidence>
<evidence type="ECO:0000255" key="4"/>
<evidence type="ECO:0000256" key="5">
    <source>
        <dbReference type="SAM" id="MobiDB-lite"/>
    </source>
</evidence>
<evidence type="ECO:0000305" key="6"/>
<protein>
    <recommendedName>
        <fullName>DNA replication licensing factor Mcm6</fullName>
        <ecNumber>3.6.4.12</ecNumber>
    </recommendedName>
</protein>
<dbReference type="EC" id="3.6.4.12"/>
<dbReference type="EMBL" id="AAAB01008980">
    <property type="protein sequence ID" value="EAA13795.3"/>
    <property type="molecule type" value="Genomic_DNA"/>
</dbReference>
<dbReference type="RefSeq" id="XP_319406.3">
    <property type="nucleotide sequence ID" value="XM_319406.3"/>
</dbReference>
<dbReference type="SMR" id="Q7Q0Q1"/>
<dbReference type="FunCoup" id="Q7Q0Q1">
    <property type="interactions" value="1613"/>
</dbReference>
<dbReference type="STRING" id="7165.Q7Q0Q1"/>
<dbReference type="PaxDb" id="7165-AGAP010219-PA"/>
<dbReference type="EnsemblMetazoa" id="AGAP010219-RA">
    <property type="protein sequence ID" value="AGAP010219-PA"/>
    <property type="gene ID" value="AGAP010219"/>
</dbReference>
<dbReference type="GeneID" id="1279642"/>
<dbReference type="KEGG" id="aga:1279642"/>
<dbReference type="CTD" id="4175"/>
<dbReference type="VEuPathDB" id="VectorBase:AGAMI1_000689"/>
<dbReference type="VEuPathDB" id="VectorBase:AGAP010219"/>
<dbReference type="eggNOG" id="KOG0480">
    <property type="taxonomic scope" value="Eukaryota"/>
</dbReference>
<dbReference type="HOGENOM" id="CLU_000995_3_2_1"/>
<dbReference type="InParanoid" id="Q7Q0Q1"/>
<dbReference type="OMA" id="RHQQTDK"/>
<dbReference type="PhylomeDB" id="Q7Q0Q1"/>
<dbReference type="Proteomes" id="UP000007062">
    <property type="component" value="Chromosome 3R"/>
</dbReference>
<dbReference type="GO" id="GO:0042555">
    <property type="term" value="C:MCM complex"/>
    <property type="evidence" value="ECO:0000318"/>
    <property type="project" value="GO_Central"/>
</dbReference>
<dbReference type="GO" id="GO:0005634">
    <property type="term" value="C:nucleus"/>
    <property type="evidence" value="ECO:0000318"/>
    <property type="project" value="GO_Central"/>
</dbReference>
<dbReference type="GO" id="GO:0005524">
    <property type="term" value="F:ATP binding"/>
    <property type="evidence" value="ECO:0007669"/>
    <property type="project" value="UniProtKB-KW"/>
</dbReference>
<dbReference type="GO" id="GO:0016887">
    <property type="term" value="F:ATP hydrolysis activity"/>
    <property type="evidence" value="ECO:0007669"/>
    <property type="project" value="RHEA"/>
</dbReference>
<dbReference type="GO" id="GO:0003678">
    <property type="term" value="F:DNA helicase activity"/>
    <property type="evidence" value="ECO:0007669"/>
    <property type="project" value="InterPro"/>
</dbReference>
<dbReference type="GO" id="GO:0003697">
    <property type="term" value="F:single-stranded DNA binding"/>
    <property type="evidence" value="ECO:0000318"/>
    <property type="project" value="GO_Central"/>
</dbReference>
<dbReference type="GO" id="GO:0008270">
    <property type="term" value="F:zinc ion binding"/>
    <property type="evidence" value="ECO:0007669"/>
    <property type="project" value="UniProtKB-KW"/>
</dbReference>
<dbReference type="GO" id="GO:0051301">
    <property type="term" value="P:cell division"/>
    <property type="evidence" value="ECO:0007669"/>
    <property type="project" value="UniProtKB-KW"/>
</dbReference>
<dbReference type="GO" id="GO:0006260">
    <property type="term" value="P:DNA replication"/>
    <property type="evidence" value="ECO:0000318"/>
    <property type="project" value="GO_Central"/>
</dbReference>
<dbReference type="GO" id="GO:0006270">
    <property type="term" value="P:DNA replication initiation"/>
    <property type="evidence" value="ECO:0007669"/>
    <property type="project" value="InterPro"/>
</dbReference>
<dbReference type="GO" id="GO:0000727">
    <property type="term" value="P:double-strand break repair via break-induced replication"/>
    <property type="evidence" value="ECO:0000318"/>
    <property type="project" value="GO_Central"/>
</dbReference>
<dbReference type="GO" id="GO:1902969">
    <property type="term" value="P:mitotic DNA replication"/>
    <property type="evidence" value="ECO:0000318"/>
    <property type="project" value="GO_Central"/>
</dbReference>
<dbReference type="CDD" id="cd17757">
    <property type="entry name" value="MCM6"/>
    <property type="match status" value="1"/>
</dbReference>
<dbReference type="FunFam" id="1.20.58.870:FF:000001">
    <property type="entry name" value="DNA helicase"/>
    <property type="match status" value="1"/>
</dbReference>
<dbReference type="FunFam" id="2.20.28.10:FF:000003">
    <property type="entry name" value="DNA helicase"/>
    <property type="match status" value="1"/>
</dbReference>
<dbReference type="FunFam" id="2.40.50.140:FF:000091">
    <property type="entry name" value="DNA helicase"/>
    <property type="match status" value="1"/>
</dbReference>
<dbReference type="FunFam" id="3.30.1640.10:FF:000004">
    <property type="entry name" value="DNA helicase"/>
    <property type="match status" value="1"/>
</dbReference>
<dbReference type="FunFam" id="3.40.50.300:FF:000115">
    <property type="entry name" value="DNA helicase"/>
    <property type="match status" value="1"/>
</dbReference>
<dbReference type="Gene3D" id="1.20.58.870">
    <property type="match status" value="1"/>
</dbReference>
<dbReference type="Gene3D" id="2.20.28.10">
    <property type="match status" value="1"/>
</dbReference>
<dbReference type="Gene3D" id="3.30.1640.10">
    <property type="entry name" value="mini-chromosome maintenance (MCM) complex, chain A, domain 1"/>
    <property type="match status" value="1"/>
</dbReference>
<dbReference type="Gene3D" id="2.40.50.140">
    <property type="entry name" value="Nucleic acid-binding proteins"/>
    <property type="match status" value="1"/>
</dbReference>
<dbReference type="Gene3D" id="3.40.50.300">
    <property type="entry name" value="P-loop containing nucleotide triphosphate hydrolases"/>
    <property type="match status" value="1"/>
</dbReference>
<dbReference type="InterPro" id="IPR031327">
    <property type="entry name" value="MCM"/>
</dbReference>
<dbReference type="InterPro" id="IPR008049">
    <property type="entry name" value="MCM6"/>
</dbReference>
<dbReference type="InterPro" id="IPR041024">
    <property type="entry name" value="Mcm6_C"/>
</dbReference>
<dbReference type="InterPro" id="IPR018525">
    <property type="entry name" value="MCM_CS"/>
</dbReference>
<dbReference type="InterPro" id="IPR001208">
    <property type="entry name" value="MCM_dom"/>
</dbReference>
<dbReference type="InterPro" id="IPR041562">
    <property type="entry name" value="MCM_lid"/>
</dbReference>
<dbReference type="InterPro" id="IPR027925">
    <property type="entry name" value="MCM_N"/>
</dbReference>
<dbReference type="InterPro" id="IPR033762">
    <property type="entry name" value="MCM_OB"/>
</dbReference>
<dbReference type="InterPro" id="IPR012340">
    <property type="entry name" value="NA-bd_OB-fold"/>
</dbReference>
<dbReference type="InterPro" id="IPR027417">
    <property type="entry name" value="P-loop_NTPase"/>
</dbReference>
<dbReference type="PANTHER" id="PTHR11630">
    <property type="entry name" value="DNA REPLICATION LICENSING FACTOR MCM FAMILY MEMBER"/>
    <property type="match status" value="1"/>
</dbReference>
<dbReference type="PANTHER" id="PTHR11630:SF43">
    <property type="entry name" value="DNA REPLICATION LICENSING FACTOR MCM6"/>
    <property type="match status" value="1"/>
</dbReference>
<dbReference type="Pfam" id="PF00493">
    <property type="entry name" value="MCM"/>
    <property type="match status" value="1"/>
</dbReference>
<dbReference type="Pfam" id="PF18263">
    <property type="entry name" value="MCM6_C"/>
    <property type="match status" value="1"/>
</dbReference>
<dbReference type="Pfam" id="PF17855">
    <property type="entry name" value="MCM_lid"/>
    <property type="match status" value="1"/>
</dbReference>
<dbReference type="Pfam" id="PF14551">
    <property type="entry name" value="MCM_N"/>
    <property type="match status" value="1"/>
</dbReference>
<dbReference type="Pfam" id="PF17207">
    <property type="entry name" value="MCM_OB"/>
    <property type="match status" value="1"/>
</dbReference>
<dbReference type="PRINTS" id="PR01657">
    <property type="entry name" value="MCMFAMILY"/>
</dbReference>
<dbReference type="PRINTS" id="PR01662">
    <property type="entry name" value="MCMPROTEIN6"/>
</dbReference>
<dbReference type="SMART" id="SM00350">
    <property type="entry name" value="MCM"/>
    <property type="match status" value="1"/>
</dbReference>
<dbReference type="SUPFAM" id="SSF50249">
    <property type="entry name" value="Nucleic acid-binding proteins"/>
    <property type="match status" value="1"/>
</dbReference>
<dbReference type="SUPFAM" id="SSF52540">
    <property type="entry name" value="P-loop containing nucleoside triphosphate hydrolases"/>
    <property type="match status" value="1"/>
</dbReference>
<dbReference type="PROSITE" id="PS00847">
    <property type="entry name" value="MCM_1"/>
    <property type="match status" value="1"/>
</dbReference>
<dbReference type="PROSITE" id="PS50051">
    <property type="entry name" value="MCM_2"/>
    <property type="match status" value="1"/>
</dbReference>
<reference evidence="6" key="1">
    <citation type="journal article" date="2002" name="Science">
        <title>The genome sequence of the malaria mosquito Anopheles gambiae.</title>
        <authorList>
            <person name="Holt R.A."/>
            <person name="Subramanian G.M."/>
            <person name="Halpern A."/>
            <person name="Sutton G.G."/>
            <person name="Charlab R."/>
            <person name="Nusskern D.R."/>
            <person name="Wincker P."/>
            <person name="Clark A.G."/>
            <person name="Ribeiro J.M.C."/>
            <person name="Wides R."/>
            <person name="Salzberg S.L."/>
            <person name="Loftus B.J."/>
            <person name="Yandell M.D."/>
            <person name="Majoros W.H."/>
            <person name="Rusch D.B."/>
            <person name="Lai Z."/>
            <person name="Kraft C.L."/>
            <person name="Abril J.F."/>
            <person name="Anthouard V."/>
            <person name="Arensburger P."/>
            <person name="Atkinson P.W."/>
            <person name="Baden H."/>
            <person name="de Berardinis V."/>
            <person name="Baldwin D."/>
            <person name="Benes V."/>
            <person name="Biedler J."/>
            <person name="Blass C."/>
            <person name="Bolanos R."/>
            <person name="Boscus D."/>
            <person name="Barnstead M."/>
            <person name="Cai S."/>
            <person name="Center A."/>
            <person name="Chaturverdi K."/>
            <person name="Christophides G.K."/>
            <person name="Chrystal M.A.M."/>
            <person name="Clamp M."/>
            <person name="Cravchik A."/>
            <person name="Curwen V."/>
            <person name="Dana A."/>
            <person name="Delcher A."/>
            <person name="Dew I."/>
            <person name="Evans C.A."/>
            <person name="Flanigan M."/>
            <person name="Grundschober-Freimoser A."/>
            <person name="Friedli L."/>
            <person name="Gu Z."/>
            <person name="Guan P."/>
            <person name="Guigo R."/>
            <person name="Hillenmeyer M.E."/>
            <person name="Hladun S.L."/>
            <person name="Hogan J.R."/>
            <person name="Hong Y.S."/>
            <person name="Hoover J."/>
            <person name="Jaillon O."/>
            <person name="Ke Z."/>
            <person name="Kodira C.D."/>
            <person name="Kokoza E."/>
            <person name="Koutsos A."/>
            <person name="Letunic I."/>
            <person name="Levitsky A.A."/>
            <person name="Liang Y."/>
            <person name="Lin J.-J."/>
            <person name="Lobo N.F."/>
            <person name="Lopez J.R."/>
            <person name="Malek J.A."/>
            <person name="McIntosh T.C."/>
            <person name="Meister S."/>
            <person name="Miller J.R."/>
            <person name="Mobarry C."/>
            <person name="Mongin E."/>
            <person name="Murphy S.D."/>
            <person name="O'Brochta D.A."/>
            <person name="Pfannkoch C."/>
            <person name="Qi R."/>
            <person name="Regier M.A."/>
            <person name="Remington K."/>
            <person name="Shao H."/>
            <person name="Sharakhova M.V."/>
            <person name="Sitter C.D."/>
            <person name="Shetty J."/>
            <person name="Smith T.J."/>
            <person name="Strong R."/>
            <person name="Sun J."/>
            <person name="Thomasova D."/>
            <person name="Ton L.Q."/>
            <person name="Topalis P."/>
            <person name="Tu Z.J."/>
            <person name="Unger M.F."/>
            <person name="Walenz B."/>
            <person name="Wang A.H."/>
            <person name="Wang J."/>
            <person name="Wang M."/>
            <person name="Wang X."/>
            <person name="Woodford K.J."/>
            <person name="Wortman J.R."/>
            <person name="Wu M."/>
            <person name="Yao A."/>
            <person name="Zdobnov E.M."/>
            <person name="Zhang H."/>
            <person name="Zhao Q."/>
            <person name="Zhao S."/>
            <person name="Zhu S.C."/>
            <person name="Zhimulev I."/>
            <person name="Coluzzi M."/>
            <person name="della Torre A."/>
            <person name="Roth C.W."/>
            <person name="Louis C."/>
            <person name="Kalush F."/>
            <person name="Mural R.J."/>
            <person name="Myers E.W."/>
            <person name="Adams M.D."/>
            <person name="Smith H.O."/>
            <person name="Broder S."/>
            <person name="Gardner M.J."/>
            <person name="Fraser C.M."/>
            <person name="Birney E."/>
            <person name="Bork P."/>
            <person name="Brey P.T."/>
            <person name="Venter J.C."/>
            <person name="Weissenbach J."/>
            <person name="Kafatos F.C."/>
            <person name="Collins F.H."/>
            <person name="Hoffman S.L."/>
        </authorList>
    </citation>
    <scope>NUCLEOTIDE SEQUENCE [LARGE SCALE GENOMIC DNA]</scope>
    <source>
        <strain>PEST</strain>
    </source>
</reference>
<accession>Q7Q0Q1</accession>
<name>MCM6_ANOGA</name>
<sequence>MDVADAHVGQLRVRDEVGVRCQKLFLDFLEEFKEDGEIKYLKTVENLVNPDRSTLEVSFEDVENYNQTLATAIIEEYYRIFPYLCQSVSNFVRDRTSLKKSKECYVSFVDVPTRHKVRELSTSKIGTLIRISGQVVRTHPVHPELVLGTFVCLDCQTEIRDVEQQFKFTNPTICRNPVCANRRRFMLEVDKSLFIDFQKVRIQETQAELPRGCIPRSVEVILRAEMVETVQAGDRYDFTGTLIVIPDVGALQLPGAKAEIGSRHKQGDNAAEGVRGLKALGMRDLNYKMAFLACSVQVTSSRFGGTDMPMSEVTSQIMKDQMTPAEWNKVYEMSRDPRLYQNLINSLFPSIYGNDEVKRGILLMLFGGVAKTTQEKTTLRGDINVCIVGDPSTAKSQFLKQVSDFSPRAVYTSGKASSAAGLTAAVVRDEESFDFVIEAGALMLADNGICCIDEFDKMDPHDQVAIHEAMEQQTISIAKAGVRATLNARTSILAAANPIGGRYDRSKSLQQNIQLTAPIMSRFDLFFILVDECNEVVDYAIARKIVDLHSHIEHSLDQVYSREDVLRYIMFARQFKPVIQPEAMALLVENYGHLRQRDTGTTGKSTWRITVRQLESMIRLSEAMAKMECSEEVTERHVKEAYRLLNKSIIRVEQPDIHLDEEEGEENENVMDIGEETPEDTPRTNETEENDQDTPAVAKKKLTLSFEEYKNLSNMLVIHMRNEESRMESEELDREGISKTELINWYLSQVEDQLESVEELMERKVLIEKVIDRLIYHDQVIIPLKQAKLGETDQDDAGDQDVLLVVHPNYIVES</sequence>
<gene>
    <name evidence="3" type="primary">Mcm6</name>
    <name type="ORF">AGAP010219</name>
</gene>
<comment type="function">
    <text evidence="2">Acts as a component of the MCM2-7 complex (MCM complex) which is the replicative helicase essential for 'once per cell cycle' DNA replication initiation and elongation in eukaryotic cells. Core component of CDC45-MCM-GINS (CMG) helicase, the molecular machine that unwinds template DNA during replication, and around which the replisome is built. The active ATPase sites in the MCM2-7 ring are formed through the interaction surfaces of two neighboring subunits such that a critical structure of a conserved arginine finger motif is provided in trans relative to the ATP-binding site of the Walker A box of the adjacent subunit. The six ATPase active sites, however, are likely to contribute differentially to the complex helicase activity.</text>
</comment>
<comment type="catalytic activity">
    <reaction evidence="2">
        <text>ATP + H2O = ADP + phosphate + H(+)</text>
        <dbReference type="Rhea" id="RHEA:13065"/>
        <dbReference type="ChEBI" id="CHEBI:15377"/>
        <dbReference type="ChEBI" id="CHEBI:15378"/>
        <dbReference type="ChEBI" id="CHEBI:30616"/>
        <dbReference type="ChEBI" id="CHEBI:43474"/>
        <dbReference type="ChEBI" id="CHEBI:456216"/>
        <dbReference type="EC" id="3.6.4.12"/>
    </reaction>
    <physiologicalReaction direction="left-to-right" evidence="2">
        <dbReference type="Rhea" id="RHEA:13066"/>
    </physiologicalReaction>
</comment>
<comment type="subunit">
    <text evidence="1">Component of the Mcm2-7 complex. The complex forms a toroidal hexameric ring with the proposed subunit order Mcm2-Mcm6-Mcm4-Mcm7-Mcm3-Mcm5 (By simililarity). The heterodimers of Mcm4/Mcm6 and Mcm3/Mcm5 interact with Mcm2 and Mcm7 (By similarity).</text>
</comment>
<comment type="subcellular location">
    <subcellularLocation>
        <location evidence="1">Nucleus</location>
    </subcellularLocation>
    <text evidence="1">Associated with chromatin during cell cycles.</text>
</comment>
<comment type="similarity">
    <text evidence="4">Belongs to the MCM family.</text>
</comment>
<feature type="chain" id="PRO_0000233314" description="DNA replication licensing factor Mcm6">
    <location>
        <begin position="1"/>
        <end position="814"/>
    </location>
</feature>
<feature type="domain" description="MCM" evidence="4">
    <location>
        <begin position="339"/>
        <end position="545"/>
    </location>
</feature>
<feature type="zinc finger region" description="C4-type" evidence="4">
    <location>
        <begin position="152"/>
        <end position="179"/>
    </location>
</feature>
<feature type="region of interest" description="Disordered" evidence="5">
    <location>
        <begin position="656"/>
        <end position="696"/>
    </location>
</feature>
<feature type="short sequence motif" description="Arginine finger">
    <location>
        <begin position="521"/>
        <end position="524"/>
    </location>
</feature>
<feature type="compositionally biased region" description="Acidic residues" evidence="5">
    <location>
        <begin position="659"/>
        <end position="679"/>
    </location>
</feature>
<feature type="binding site" evidence="2">
    <location>
        <position position="392"/>
    </location>
    <ligand>
        <name>ATP</name>
        <dbReference type="ChEBI" id="CHEBI:30616"/>
        <note>ligand shared with MCM4</note>
    </ligand>
</feature>
<feature type="binding site" evidence="2">
    <location>
        <position position="393"/>
    </location>
    <ligand>
        <name>ATP</name>
        <dbReference type="ChEBI" id="CHEBI:30616"/>
        <note>ligand shared with MCM4</note>
    </ligand>
</feature>
<feature type="binding site" evidence="2">
    <location>
        <position position="394"/>
    </location>
    <ligand>
        <name>ATP</name>
        <dbReference type="ChEBI" id="CHEBI:30616"/>
        <note>ligand shared with MCM4</note>
    </ligand>
</feature>
<feature type="binding site" evidence="2">
    <location>
        <position position="395"/>
    </location>
    <ligand>
        <name>ATP</name>
        <dbReference type="ChEBI" id="CHEBI:30616"/>
        <note>ligand shared with MCM4</note>
    </ligand>
</feature>
<feature type="binding site" evidence="2">
    <location>
        <position position="396"/>
    </location>
    <ligand>
        <name>ATP</name>
        <dbReference type="ChEBI" id="CHEBI:30616"/>
        <note>ligand shared with MCM4</note>
    </ligand>
</feature>
<feature type="binding site" evidence="2">
    <location>
        <position position="497"/>
    </location>
    <ligand>
        <name>ATP</name>
        <dbReference type="ChEBI" id="CHEBI:30616"/>
        <note>ligand shared with MCM4</note>
    </ligand>
</feature>
<feature type="binding site" evidence="2">
    <location>
        <position position="612"/>
    </location>
    <ligand>
        <name>ADP</name>
        <dbReference type="ChEBI" id="CHEBI:456216"/>
        <note>ligand shared with MCM2</note>
    </ligand>
</feature>
<feature type="binding site" evidence="2">
    <location>
        <position position="615"/>
    </location>
    <ligand>
        <name>ADP</name>
        <dbReference type="ChEBI" id="CHEBI:456216"/>
        <note>ligand shared with MCM2</note>
    </ligand>
</feature>